<reference key="1">
    <citation type="journal article" date="2014" name="J. Proteomics">
        <title>Multifunctional warheads: diversification of the toxin arsenal of centipedes via novel multidomain transcripts.</title>
        <authorList>
            <person name="Undheim E.A."/>
            <person name="Sunagar K."/>
            <person name="Hamilton B.R."/>
            <person name="Jones A."/>
            <person name="Venter D.J."/>
            <person name="Fry B.G."/>
            <person name="King G.F."/>
        </authorList>
    </citation>
    <scope>NUCLEOTIDE SEQUENCE [MRNA]</scope>
    <source>
        <tissue>Venom gland</tissue>
    </source>
</reference>
<evidence type="ECO:0000250" key="1">
    <source>
        <dbReference type="UniProtKB" id="A0A023W0B6"/>
    </source>
</evidence>
<evidence type="ECO:0000255" key="2"/>
<evidence type="ECO:0000256" key="3">
    <source>
        <dbReference type="SAM" id="MobiDB-lite"/>
    </source>
</evidence>
<evidence type="ECO:0000305" key="4"/>
<evidence type="ECO:0000305" key="5">
    <source>
    </source>
</evidence>
<evidence type="ECO:0000312" key="6">
    <source>
        <dbReference type="EMBL" id="AHY22609.1"/>
    </source>
</evidence>
<dbReference type="EMBL" id="KF130758">
    <property type="protein sequence ID" value="AHY22609.1"/>
    <property type="molecule type" value="mRNA"/>
</dbReference>
<dbReference type="GO" id="GO:0005576">
    <property type="term" value="C:extracellular region"/>
    <property type="evidence" value="ECO:0007669"/>
    <property type="project" value="UniProtKB-SubCell"/>
</dbReference>
<dbReference type="GO" id="GO:0090729">
    <property type="term" value="F:toxin activity"/>
    <property type="evidence" value="ECO:0007669"/>
    <property type="project" value="UniProtKB-KW"/>
</dbReference>
<organism>
    <name type="scientific">Ethmostigmus rubripes</name>
    <name type="common">Giant centipede</name>
    <dbReference type="NCBI Taxonomy" id="62613"/>
    <lineage>
        <taxon>Eukaryota</taxon>
        <taxon>Metazoa</taxon>
        <taxon>Ecdysozoa</taxon>
        <taxon>Arthropoda</taxon>
        <taxon>Myriapoda</taxon>
        <taxon>Chilopoda</taxon>
        <taxon>Pleurostigmophora</taxon>
        <taxon>Scolopendromorpha</taxon>
        <taxon>Scolopendridae</taxon>
        <taxon>Ethmostigmus</taxon>
    </lineage>
</organism>
<protein>
    <recommendedName>
        <fullName evidence="4">U-scoloptoxin-Er5c</fullName>
        <shortName evidence="4">U-SLPTX-Er5c</shortName>
    </recommendedName>
    <alternativeName>
        <fullName evidence="6">U-scoloptoxin-Er5-like</fullName>
        <shortName evidence="6">U-SLPTX-Er5-like</shortName>
    </alternativeName>
    <component>
        <recommendedName>
            <fullName evidence="1">U-scoloptoxin-Er5.1b</fullName>
            <shortName evidence="1">U-SLPTX-Er5.1b</shortName>
        </recommendedName>
    </component>
    <component>
        <recommendedName>
            <fullName evidence="1">U-scoloptoxin-Er5.2b</fullName>
            <shortName evidence="1">U-SLPTX-Er5.2b</shortName>
        </recommendedName>
    </component>
</protein>
<keyword id="KW-0165">Cleavage on pair of basic residues</keyword>
<keyword id="KW-0873">Pyrrolidone carboxylic acid</keyword>
<keyword id="KW-0677">Repeat</keyword>
<keyword id="KW-0964">Secreted</keyword>
<keyword id="KW-0732">Signal</keyword>
<keyword id="KW-0800">Toxin</keyword>
<proteinExistence type="evidence at transcript level"/>
<name>TX85C_ETHRU</name>
<comment type="subcellular location">
    <subcellularLocation>
        <location evidence="5">Secreted</location>
    </subcellularLocation>
</comment>
<comment type="tissue specificity">
    <text evidence="5">Expressed by the venom gland.</text>
</comment>
<comment type="similarity">
    <text evidence="4">Belongs to the scoloptoxin-08 family.</text>
</comment>
<accession>A0A023W0V9</accession>
<sequence length="167" mass="20745">MKTNCEFPLLCLLIVLVANVEGEVEDTGLKMVKRLWRNWEDPEQRQLLDQEAEQEKQLEKRLWRNWEDLELRQLLNEFAENQREKRLWRNWERRQVAKEDDGEKPKELWRNWEDLKRRQVVDLNDEQKTQRDKRLWRNWEDNHATLRKRSADSLSRQKRLGRERGKE</sequence>
<feature type="signal peptide" evidence="2">
    <location>
        <begin position="1"/>
        <end position="22"/>
    </location>
</feature>
<feature type="propeptide" id="PRO_0000446740" evidence="5">
    <location>
        <begin position="23"/>
        <end position="94"/>
    </location>
</feature>
<feature type="peptide" id="PRO_5001524647" description="U-scoloptoxin-Er5.1b" evidence="1">
    <location>
        <begin position="95"/>
        <end position="111"/>
    </location>
</feature>
<feature type="propeptide" id="PRO_0000446741" evidence="5">
    <location>
        <begin position="112"/>
        <end position="118"/>
    </location>
</feature>
<feature type="peptide" id="PRO_0000446742" description="U-scoloptoxin-Er5.2b" evidence="1">
    <location>
        <begin position="119"/>
        <end position="138"/>
    </location>
</feature>
<feature type="propeptide" id="PRO_0000446743" evidence="1">
    <location>
        <begin position="139"/>
        <end position="167"/>
    </location>
</feature>
<feature type="repeat" description="RLWRNWE 1" evidence="5">
    <location>
        <begin position="34"/>
        <end position="40"/>
    </location>
</feature>
<feature type="repeat" description="RLWRNWE 2" evidence="5">
    <location>
        <begin position="61"/>
        <end position="67"/>
    </location>
</feature>
<feature type="repeat" description="RLWRNWE 3" evidence="5">
    <location>
        <begin position="86"/>
        <end position="92"/>
    </location>
</feature>
<feature type="repeat" description="RLWRNWE 4; approximate" evidence="5">
    <location>
        <begin position="107"/>
        <end position="113"/>
    </location>
</feature>
<feature type="repeat" description="RLWRNWE 5" evidence="5">
    <location>
        <begin position="134"/>
        <end position="140"/>
    </location>
</feature>
<feature type="region of interest" description="Disordered" evidence="3">
    <location>
        <begin position="147"/>
        <end position="167"/>
    </location>
</feature>
<feature type="modified residue" description="Pyrrolidone carboxylic acid" evidence="1">
    <location>
        <position position="95"/>
    </location>
</feature>
<feature type="modified residue" description="Pyrrolidone carboxylic acid" evidence="1">
    <location>
        <position position="119"/>
    </location>
</feature>